<keyword id="KW-0378">Hydrolase</keyword>
<keyword id="KW-0456">Lyase</keyword>
<keyword id="KW-1185">Reference proteome</keyword>
<reference key="1">
    <citation type="journal article" date="2003" name="Nature">
        <title>The genome sequence of the filamentous fungus Neurospora crassa.</title>
        <authorList>
            <person name="Galagan J.E."/>
            <person name="Calvo S.E."/>
            <person name="Borkovich K.A."/>
            <person name="Selker E.U."/>
            <person name="Read N.D."/>
            <person name="Jaffe D.B."/>
            <person name="FitzHugh W."/>
            <person name="Ma L.-J."/>
            <person name="Smirnov S."/>
            <person name="Purcell S."/>
            <person name="Rehman B."/>
            <person name="Elkins T."/>
            <person name="Engels R."/>
            <person name="Wang S."/>
            <person name="Nielsen C.B."/>
            <person name="Butler J."/>
            <person name="Endrizzi M."/>
            <person name="Qui D."/>
            <person name="Ianakiev P."/>
            <person name="Bell-Pedersen D."/>
            <person name="Nelson M.A."/>
            <person name="Werner-Washburne M."/>
            <person name="Selitrennikoff C.P."/>
            <person name="Kinsey J.A."/>
            <person name="Braun E.L."/>
            <person name="Zelter A."/>
            <person name="Schulte U."/>
            <person name="Kothe G.O."/>
            <person name="Jedd G."/>
            <person name="Mewes H.-W."/>
            <person name="Staben C."/>
            <person name="Marcotte E."/>
            <person name="Greenberg D."/>
            <person name="Roy A."/>
            <person name="Foley K."/>
            <person name="Naylor J."/>
            <person name="Stange-Thomann N."/>
            <person name="Barrett R."/>
            <person name="Gnerre S."/>
            <person name="Kamal M."/>
            <person name="Kamvysselis M."/>
            <person name="Mauceli E.W."/>
            <person name="Bielke C."/>
            <person name="Rudd S."/>
            <person name="Frishman D."/>
            <person name="Krystofova S."/>
            <person name="Rasmussen C."/>
            <person name="Metzenberg R.L."/>
            <person name="Perkins D.D."/>
            <person name="Kroken S."/>
            <person name="Cogoni C."/>
            <person name="Macino G."/>
            <person name="Catcheside D.E.A."/>
            <person name="Li W."/>
            <person name="Pratt R.J."/>
            <person name="Osmani S.A."/>
            <person name="DeSouza C.P.C."/>
            <person name="Glass N.L."/>
            <person name="Orbach M.J."/>
            <person name="Berglund J.A."/>
            <person name="Voelker R."/>
            <person name="Yarden O."/>
            <person name="Plamann M."/>
            <person name="Seiler S."/>
            <person name="Dunlap J.C."/>
            <person name="Radford A."/>
            <person name="Aramayo R."/>
            <person name="Natvig D.O."/>
            <person name="Alex L.A."/>
            <person name="Mannhaupt G."/>
            <person name="Ebbole D.J."/>
            <person name="Freitag M."/>
            <person name="Paulsen I."/>
            <person name="Sachs M.S."/>
            <person name="Lander E.S."/>
            <person name="Nusbaum C."/>
            <person name="Birren B.W."/>
        </authorList>
    </citation>
    <scope>NUCLEOTIDE SEQUENCE [LARGE SCALE GENOMIC DNA]</scope>
    <source>
        <strain>ATCC 24698 / 74-OR23-1A / CBS 708.71 / DSM 1257 / FGSC 987</strain>
    </source>
</reference>
<reference key="2">
    <citation type="journal article" date="2008" name="Appl. Microbiol. Biotechnol.">
        <title>Genome mining of cyanide-degrading nitrilases from filamentous fungi.</title>
        <authorList>
            <person name="Basile L.J."/>
            <person name="Willson R.C."/>
            <person name="Sewell B.T."/>
            <person name="Benedik M.J."/>
        </authorList>
    </citation>
    <scope>FUNCTION</scope>
    <scope>CATALYTIC ACTIVITY</scope>
    <scope>BIOPHYSICOCHEMICAL PROPERTIES</scope>
    <scope>INDUCTION</scope>
</reference>
<reference key="3">
    <citation type="journal article" date="2009" name="Appl. Microbiol. Biotechnol.">
        <title>The cyanide hydratase from Neurospora crassa forms a helix which has a dimeric repeat.</title>
        <authorList>
            <person name="Dent K.C."/>
            <person name="Weber B.W."/>
            <person name="Benedik M.J."/>
            <person name="Sewell B.T."/>
        </authorList>
    </citation>
    <scope>SUBUNIT</scope>
</reference>
<comment type="function">
    <text evidence="1 3">Catalyzes the hydration of cyanide to formamide. Degradation of cyanide may be important for plant pathogenic fungi in infection of cyanogenic plants.</text>
</comment>
<comment type="catalytic activity">
    <reaction evidence="1 3">
        <text>formamide = hydrogen cyanide + H2O</text>
        <dbReference type="Rhea" id="RHEA:21720"/>
        <dbReference type="ChEBI" id="CHEBI:15377"/>
        <dbReference type="ChEBI" id="CHEBI:16397"/>
        <dbReference type="ChEBI" id="CHEBI:18407"/>
        <dbReference type="EC" id="4.2.1.66"/>
    </reaction>
</comment>
<comment type="biophysicochemical properties">
    <phDependence>
        <text evidence="3">Optimum pH is 6-7. Active fom pH 5 to pH 9.</text>
    </phDependence>
</comment>
<comment type="subunit">
    <text evidence="1 4">Oligomer of dimers, forming left-handed helical fibers with a diameter of 13 nm but with lengths ranging from approximately 1 um at the leading edge of the peak to having approximately the same length and diameter at the trailing edge.</text>
</comment>
<comment type="induction">
    <text evidence="1 3">By cyanide.</text>
</comment>
<comment type="similarity">
    <text evidence="1">Belongs to the carbon-nitrogen hydrolase superfamily. Nitrilase family.</text>
</comment>
<gene>
    <name evidence="6" type="primary">cnh-1</name>
    <name evidence="5" type="synonym">cht</name>
    <name type="ORF">NCU04697</name>
</gene>
<organism>
    <name type="scientific">Neurospora crassa (strain ATCC 24698 / 74-OR23-1A / CBS 708.71 / DSM 1257 / FGSC 987)</name>
    <dbReference type="NCBI Taxonomy" id="367110"/>
    <lineage>
        <taxon>Eukaryota</taxon>
        <taxon>Fungi</taxon>
        <taxon>Dikarya</taxon>
        <taxon>Ascomycota</taxon>
        <taxon>Pezizomycotina</taxon>
        <taxon>Sordariomycetes</taxon>
        <taxon>Sordariomycetidae</taxon>
        <taxon>Sordariales</taxon>
        <taxon>Sordariaceae</taxon>
        <taxon>Neurospora</taxon>
    </lineage>
</organism>
<accession>Q7RVT0</accession>
<dbReference type="EC" id="4.2.1.66" evidence="1 3"/>
<dbReference type="EMBL" id="CM002241">
    <property type="protein sequence ID" value="EAA30924.2"/>
    <property type="molecule type" value="Genomic_DNA"/>
</dbReference>
<dbReference type="RefSeq" id="XP_960160.2">
    <property type="nucleotide sequence ID" value="XM_955067.3"/>
</dbReference>
<dbReference type="SMR" id="Q7RVT0"/>
<dbReference type="FunCoup" id="Q7RVT0">
    <property type="interactions" value="687"/>
</dbReference>
<dbReference type="STRING" id="367110.Q7RVT0"/>
<dbReference type="PaxDb" id="5141-EFNCRP00000004519"/>
<dbReference type="EnsemblFungi" id="EAA30924">
    <property type="protein sequence ID" value="EAA30924"/>
    <property type="gene ID" value="NCU04697"/>
</dbReference>
<dbReference type="GeneID" id="3876307"/>
<dbReference type="KEGG" id="ncr:NCU04697"/>
<dbReference type="VEuPathDB" id="FungiDB:NCU04697"/>
<dbReference type="HOGENOM" id="CLU_030130_6_0_1"/>
<dbReference type="InParanoid" id="Q7RVT0"/>
<dbReference type="OMA" id="TSEPCWF"/>
<dbReference type="OrthoDB" id="10250282at2759"/>
<dbReference type="Proteomes" id="UP000001805">
    <property type="component" value="Chromosome 5, Linkage Group VI"/>
</dbReference>
<dbReference type="GO" id="GO:0030196">
    <property type="term" value="F:cyanide hydratase activity"/>
    <property type="evidence" value="ECO:0007669"/>
    <property type="project" value="UniProtKB-UniRule"/>
</dbReference>
<dbReference type="GO" id="GO:0000257">
    <property type="term" value="F:nitrilase activity"/>
    <property type="evidence" value="ECO:0007669"/>
    <property type="project" value="UniProtKB-ARBA"/>
</dbReference>
<dbReference type="GO" id="GO:0019500">
    <property type="term" value="P:cyanide catabolic process"/>
    <property type="evidence" value="ECO:0007669"/>
    <property type="project" value="UniProtKB-UniRule"/>
</dbReference>
<dbReference type="CDD" id="cd07564">
    <property type="entry name" value="nitrilases_CHs"/>
    <property type="match status" value="1"/>
</dbReference>
<dbReference type="FunFam" id="3.60.110.10:FF:000011">
    <property type="entry name" value="Cyanide hydratase"/>
    <property type="match status" value="1"/>
</dbReference>
<dbReference type="Gene3D" id="3.60.110.10">
    <property type="entry name" value="Carbon-nitrogen hydrolase"/>
    <property type="match status" value="1"/>
</dbReference>
<dbReference type="HAMAP" id="MF_03224">
    <property type="entry name" value="CN_hydrolase"/>
    <property type="match status" value="1"/>
</dbReference>
<dbReference type="InterPro" id="IPR003010">
    <property type="entry name" value="C-N_Hydrolase"/>
</dbReference>
<dbReference type="InterPro" id="IPR036526">
    <property type="entry name" value="C-N_Hydrolase_sf"/>
</dbReference>
<dbReference type="InterPro" id="IPR037544">
    <property type="entry name" value="CN_hydrolase"/>
</dbReference>
<dbReference type="InterPro" id="IPR000132">
    <property type="entry name" value="Nitrilase/CN_hydratase_CS"/>
</dbReference>
<dbReference type="InterPro" id="IPR044149">
    <property type="entry name" value="Nitrilases_CHs"/>
</dbReference>
<dbReference type="PANTHER" id="PTHR46044:SF4">
    <property type="entry name" value="CYANIDE HYDRATASE"/>
    <property type="match status" value="1"/>
</dbReference>
<dbReference type="PANTHER" id="PTHR46044">
    <property type="entry name" value="NITRILASE"/>
    <property type="match status" value="1"/>
</dbReference>
<dbReference type="Pfam" id="PF00795">
    <property type="entry name" value="CN_hydrolase"/>
    <property type="match status" value="1"/>
</dbReference>
<dbReference type="SUPFAM" id="SSF56317">
    <property type="entry name" value="Carbon-nitrogen hydrolase"/>
    <property type="match status" value="1"/>
</dbReference>
<dbReference type="PROSITE" id="PS50263">
    <property type="entry name" value="CN_HYDROLASE"/>
    <property type="match status" value="1"/>
</dbReference>
<dbReference type="PROSITE" id="PS00920">
    <property type="entry name" value="NITRIL_CHT_1"/>
    <property type="match status" value="1"/>
</dbReference>
<dbReference type="PROSITE" id="PS00921">
    <property type="entry name" value="NITRIL_CHT_2"/>
    <property type="match status" value="1"/>
</dbReference>
<name>CHT_NEUCR</name>
<feature type="chain" id="PRO_0000440035" description="Cyanide hydratase">
    <location>
        <begin position="1"/>
        <end position="351"/>
    </location>
</feature>
<feature type="domain" description="CN hydrolase" evidence="2">
    <location>
        <begin position="6"/>
        <end position="285"/>
    </location>
</feature>
<feature type="active site" description="Proton acceptor" evidence="2">
    <location>
        <position position="46"/>
    </location>
</feature>
<feature type="active site" evidence="2">
    <location>
        <position position="128"/>
    </location>
</feature>
<feature type="active site" description="Nucleophile" evidence="2">
    <location>
        <position position="163"/>
    </location>
</feature>
<evidence type="ECO:0000255" key="1">
    <source>
        <dbReference type="HAMAP-Rule" id="MF_03224"/>
    </source>
</evidence>
<evidence type="ECO:0000255" key="2">
    <source>
        <dbReference type="PROSITE-ProRule" id="PRU00054"/>
    </source>
</evidence>
<evidence type="ECO:0000269" key="3">
    <source>
    </source>
</evidence>
<evidence type="ECO:0000269" key="4">
    <source>
    </source>
</evidence>
<evidence type="ECO:0000303" key="5">
    <source>
    </source>
</evidence>
<evidence type="ECO:0000303" key="6">
    <source>
    </source>
</evidence>
<sequence>MVLTKYKAAAVTSEPCWFDLEGGVRKTIDFINEAGQAGCKLVAFPEVWIPGYPYWMWKVTYQQSLPMLKKYRENAMAVDSDEFRRIRRAARDNQIYVSLGFAEIDHATLYLAQALIDPTGEVINHRRKIKPTHVEKLVYGDGAGDTFMSVTPTELGRLGQLNCWENMNPFLKSLNVSMGEQIHIAAWPIYPGKETLKYPDPATNVADPASDLVTPAYAIETGTWTLAPFQRLSVEGLKKNTPEGVEPETDPSTYNGHARIYRPDGSLVVRPDKDFDGLLFVDIDLNECHLTKALADFAGHYMRPDLIRLLVDTSRKELVTEVDRNGGIVQYSTRERLGLNTPLENDKEGKK</sequence>
<protein>
    <recommendedName>
        <fullName evidence="1 5">Cyanide hydratase</fullName>
        <shortName evidence="1 5">CHT</shortName>
        <ecNumber evidence="1 3">4.2.1.66</ecNumber>
    </recommendedName>
    <alternativeName>
        <fullName evidence="1">Cyanide-degrading nitrilase</fullName>
    </alternativeName>
    <alternativeName>
        <fullName evidence="1">Formamide hydrolyase</fullName>
    </alternativeName>
</protein>
<proteinExistence type="evidence at protein level"/>